<comment type="function">
    <text evidence="1">Mnh complex is a Na(+)/H(+) antiporter involved in Na(+) excretion.</text>
</comment>
<comment type="subunit">
    <text evidence="1">May form a heterooligomeric complex that consists of seven subunits: mnhA1, mnhB1, mnhC1, mnhD1, mnhE1, mnhF1 and mnhG1.</text>
</comment>
<comment type="subcellular location">
    <subcellularLocation>
        <location evidence="3">Cell membrane</location>
        <topology evidence="3">Multi-pass membrane protein</topology>
    </subcellularLocation>
</comment>
<comment type="similarity">
    <text evidence="3">Belongs to the CPA3 antiporters (TC 2.A.63) subunit C family.</text>
</comment>
<comment type="sequence caution" evidence="3">
    <conflict type="erroneous initiation">
        <sequence resource="EMBL-CDS" id="ABD30012"/>
    </conflict>
</comment>
<protein>
    <recommendedName>
        <fullName>Na(+)/H(+) antiporter subunit C1</fullName>
    </recommendedName>
    <alternativeName>
        <fullName>Mnh complex subunit C1</fullName>
    </alternativeName>
</protein>
<dbReference type="EMBL" id="CP000253">
    <property type="protein sequence ID" value="ABD30012.1"/>
    <property type="status" value="ALT_INIT"/>
    <property type="molecule type" value="Genomic_DNA"/>
</dbReference>
<dbReference type="RefSeq" id="WP_000402803.1">
    <property type="nucleotide sequence ID" value="NZ_LS483365.1"/>
</dbReference>
<dbReference type="RefSeq" id="WP_011443624.1">
    <property type="nucleotide sequence ID" value="NC_007795.1"/>
</dbReference>
<dbReference type="RefSeq" id="YP_499440.1">
    <property type="nucleotide sequence ID" value="NC_007795.1"/>
</dbReference>
<dbReference type="SMR" id="Q2FZV3"/>
<dbReference type="STRING" id="93061.SAOUHSC_00887"/>
<dbReference type="PaxDb" id="1280-SAXN108_0945"/>
<dbReference type="GeneID" id="3919234"/>
<dbReference type="GeneID" id="98345271"/>
<dbReference type="KEGG" id="sao:SAOUHSC_00887"/>
<dbReference type="PATRIC" id="fig|93061.5.peg.807"/>
<dbReference type="eggNOG" id="COG1006">
    <property type="taxonomic scope" value="Bacteria"/>
</dbReference>
<dbReference type="HOGENOM" id="CLU_082058_3_1_9"/>
<dbReference type="OrthoDB" id="9799219at2"/>
<dbReference type="Proteomes" id="UP000008816">
    <property type="component" value="Chromosome"/>
</dbReference>
<dbReference type="GO" id="GO:0005886">
    <property type="term" value="C:plasma membrane"/>
    <property type="evidence" value="ECO:0007669"/>
    <property type="project" value="UniProtKB-SubCell"/>
</dbReference>
<dbReference type="GO" id="GO:0015385">
    <property type="term" value="F:sodium:proton antiporter activity"/>
    <property type="evidence" value="ECO:0000318"/>
    <property type="project" value="GO_Central"/>
</dbReference>
<dbReference type="GO" id="GO:0035725">
    <property type="term" value="P:sodium ion transmembrane transport"/>
    <property type="evidence" value="ECO:0000318"/>
    <property type="project" value="GO_Central"/>
</dbReference>
<dbReference type="Gene3D" id="1.10.287.3510">
    <property type="match status" value="1"/>
</dbReference>
<dbReference type="InterPro" id="IPR050601">
    <property type="entry name" value="CPA3_antiporter_subunitC"/>
</dbReference>
<dbReference type="InterPro" id="IPR006673">
    <property type="entry name" value="Mnh_C1_su"/>
</dbReference>
<dbReference type="InterPro" id="IPR039428">
    <property type="entry name" value="NUOK/Mnh_C1-like"/>
</dbReference>
<dbReference type="NCBIfam" id="TIGR00941">
    <property type="entry name" value="2a6301s03"/>
    <property type="match status" value="1"/>
</dbReference>
<dbReference type="NCBIfam" id="NF006372">
    <property type="entry name" value="PRK08600.1"/>
    <property type="match status" value="1"/>
</dbReference>
<dbReference type="NCBIfam" id="NF006573">
    <property type="entry name" value="PRK09094.1"/>
    <property type="match status" value="1"/>
</dbReference>
<dbReference type="NCBIfam" id="NF009303">
    <property type="entry name" value="PRK12660.1"/>
    <property type="match status" value="1"/>
</dbReference>
<dbReference type="PANTHER" id="PTHR34583">
    <property type="entry name" value="ANTIPORTER SUBUNIT MNHC2-RELATED"/>
    <property type="match status" value="1"/>
</dbReference>
<dbReference type="PANTHER" id="PTHR34583:SF2">
    <property type="entry name" value="ANTIPORTER SUBUNIT MNHC2-RELATED"/>
    <property type="match status" value="1"/>
</dbReference>
<dbReference type="Pfam" id="PF00420">
    <property type="entry name" value="Oxidored_q2"/>
    <property type="match status" value="1"/>
</dbReference>
<feature type="chain" id="PRO_0000372121" description="Na(+)/H(+) antiporter subunit C1">
    <location>
        <begin position="1"/>
        <end position="113"/>
    </location>
</feature>
<feature type="transmembrane region" description="Helical" evidence="2">
    <location>
        <begin position="6"/>
        <end position="26"/>
    </location>
</feature>
<feature type="transmembrane region" description="Helical" evidence="2">
    <location>
        <begin position="28"/>
        <end position="48"/>
    </location>
</feature>
<feature type="transmembrane region" description="Helical" evidence="2">
    <location>
        <begin position="72"/>
        <end position="92"/>
    </location>
</feature>
<accession>Q2FZV3</accession>
<evidence type="ECO:0000250" key="1"/>
<evidence type="ECO:0000255" key="2"/>
<evidence type="ECO:0000305" key="3"/>
<keyword id="KW-0050">Antiport</keyword>
<keyword id="KW-1003">Cell membrane</keyword>
<keyword id="KW-0375">Hydrogen ion transport</keyword>
<keyword id="KW-0406">Ion transport</keyword>
<keyword id="KW-0472">Membrane</keyword>
<keyword id="KW-1185">Reference proteome</keyword>
<keyword id="KW-0915">Sodium</keyword>
<keyword id="KW-0739">Sodium transport</keyword>
<keyword id="KW-0812">Transmembrane</keyword>
<keyword id="KW-1133">Transmembrane helix</keyword>
<keyword id="KW-0813">Transport</keyword>
<reference key="1">
    <citation type="book" date="2006" name="Gram positive pathogens, 2nd edition">
        <title>The Staphylococcus aureus NCTC 8325 genome.</title>
        <editorList>
            <person name="Fischetti V."/>
            <person name="Novick R."/>
            <person name="Ferretti J."/>
            <person name="Portnoy D."/>
            <person name="Rood J."/>
        </editorList>
        <authorList>
            <person name="Gillaspy A.F."/>
            <person name="Worrell V."/>
            <person name="Orvis J."/>
            <person name="Roe B.A."/>
            <person name="Dyer D.W."/>
            <person name="Iandolo J.J."/>
        </authorList>
    </citation>
    <scope>NUCLEOTIDE SEQUENCE [LARGE SCALE GENOMIC DNA]</scope>
    <source>
        <strain>NCTC 8325 / PS 47</strain>
    </source>
</reference>
<organism>
    <name type="scientific">Staphylococcus aureus (strain NCTC 8325 / PS 47)</name>
    <dbReference type="NCBI Taxonomy" id="93061"/>
    <lineage>
        <taxon>Bacteria</taxon>
        <taxon>Bacillati</taxon>
        <taxon>Bacillota</taxon>
        <taxon>Bacilli</taxon>
        <taxon>Bacillales</taxon>
        <taxon>Staphylococcaceae</taxon>
        <taxon>Staphylococcus</taxon>
    </lineage>
</organism>
<name>MNHC1_STAA8</name>
<sequence>MEIIMIFVSGILTAISVYLVLSKSLIRIVMGTTLLTHAANLFLITMGGLKHGTVPIYEANVKSYVDPIPQALILTAIVIAFATTAFFLVLAFRTYKELGTDNVESMKGVPEDD</sequence>
<proteinExistence type="inferred from homology"/>
<gene>
    <name type="primary">mnhC1</name>
    <name type="ordered locus">SAOUHSC_00887</name>
</gene>